<organism>
    <name type="scientific">Salmonella typhimurium (strain LT2 / SGSC1412 / ATCC 700720)</name>
    <dbReference type="NCBI Taxonomy" id="99287"/>
    <lineage>
        <taxon>Bacteria</taxon>
        <taxon>Pseudomonadati</taxon>
        <taxon>Pseudomonadota</taxon>
        <taxon>Gammaproteobacteria</taxon>
        <taxon>Enterobacterales</taxon>
        <taxon>Enterobacteriaceae</taxon>
        <taxon>Salmonella</taxon>
    </lineage>
</organism>
<sequence length="130" mass="14127">MSMQDPIADMLTRIRNGQAANKAAVTMPSSKLKVAIANVLKEEGFIEDFKVEGDTKPELELTLKYFQGKAVVESIQRVSRPGLRIYKRKDELPKVMAGLGIAVVSTSKGVMTDRAARQAGLGGEIICYVA</sequence>
<feature type="initiator methionine" description="Removed" evidence="1">
    <location>
        <position position="1"/>
    </location>
</feature>
<feature type="chain" id="PRO_0000126479" description="Small ribosomal subunit protein uS8">
    <location>
        <begin position="2"/>
        <end position="130"/>
    </location>
</feature>
<name>RS8_SALTY</name>
<comment type="function">
    <text evidence="1">One of the primary rRNA binding proteins, it binds directly to 16S rRNA central domain where it helps coordinate assembly of the platform of the 30S subunit.</text>
</comment>
<comment type="subunit">
    <text evidence="1">Part of the 30S ribosomal subunit. Contacts proteins S5 and S12 (By similarity).</text>
</comment>
<comment type="similarity">
    <text evidence="2">Belongs to the universal ribosomal protein uS8 family.</text>
</comment>
<proteinExistence type="inferred from homology"/>
<keyword id="KW-1185">Reference proteome</keyword>
<keyword id="KW-0687">Ribonucleoprotein</keyword>
<keyword id="KW-0689">Ribosomal protein</keyword>
<keyword id="KW-0694">RNA-binding</keyword>
<keyword id="KW-0699">rRNA-binding</keyword>
<reference key="1">
    <citation type="journal article" date="2001" name="Nature">
        <title>Complete genome sequence of Salmonella enterica serovar Typhimurium LT2.</title>
        <authorList>
            <person name="McClelland M."/>
            <person name="Sanderson K.E."/>
            <person name="Spieth J."/>
            <person name="Clifton S.W."/>
            <person name="Latreille P."/>
            <person name="Courtney L."/>
            <person name="Porwollik S."/>
            <person name="Ali J."/>
            <person name="Dante M."/>
            <person name="Du F."/>
            <person name="Hou S."/>
            <person name="Layman D."/>
            <person name="Leonard S."/>
            <person name="Nguyen C."/>
            <person name="Scott K."/>
            <person name="Holmes A."/>
            <person name="Grewal N."/>
            <person name="Mulvaney E."/>
            <person name="Ryan E."/>
            <person name="Sun H."/>
            <person name="Florea L."/>
            <person name="Miller W."/>
            <person name="Stoneking T."/>
            <person name="Nhan M."/>
            <person name="Waterston R."/>
            <person name="Wilson R.K."/>
        </authorList>
    </citation>
    <scope>NUCLEOTIDE SEQUENCE [LARGE SCALE GENOMIC DNA]</scope>
    <source>
        <strain>LT2 / SGSC1412 / ATCC 700720</strain>
    </source>
</reference>
<dbReference type="EMBL" id="AE006468">
    <property type="protein sequence ID" value="AAL22289.1"/>
    <property type="molecule type" value="Genomic_DNA"/>
</dbReference>
<dbReference type="RefSeq" id="NP_462330.1">
    <property type="nucleotide sequence ID" value="NC_003197.2"/>
</dbReference>
<dbReference type="RefSeq" id="WP_000062611.1">
    <property type="nucleotide sequence ID" value="NC_003197.2"/>
</dbReference>
<dbReference type="SMR" id="P0A7X0"/>
<dbReference type="STRING" id="99287.STM3426"/>
<dbReference type="PaxDb" id="99287-STM3426"/>
<dbReference type="GeneID" id="1254949"/>
<dbReference type="GeneID" id="93778681"/>
<dbReference type="KEGG" id="stm:STM3426"/>
<dbReference type="PATRIC" id="fig|99287.12.peg.3623"/>
<dbReference type="HOGENOM" id="CLU_098428_0_0_6"/>
<dbReference type="OMA" id="NSAYHDT"/>
<dbReference type="PhylomeDB" id="P0A7X0"/>
<dbReference type="BioCyc" id="SENT99287:STM3426-MONOMER"/>
<dbReference type="Proteomes" id="UP000001014">
    <property type="component" value="Chromosome"/>
</dbReference>
<dbReference type="GO" id="GO:0022627">
    <property type="term" value="C:cytosolic small ribosomal subunit"/>
    <property type="evidence" value="ECO:0000318"/>
    <property type="project" value="GO_Central"/>
</dbReference>
<dbReference type="GO" id="GO:0019843">
    <property type="term" value="F:rRNA binding"/>
    <property type="evidence" value="ECO:0007669"/>
    <property type="project" value="UniProtKB-UniRule"/>
</dbReference>
<dbReference type="GO" id="GO:0003735">
    <property type="term" value="F:structural constituent of ribosome"/>
    <property type="evidence" value="ECO:0000318"/>
    <property type="project" value="GO_Central"/>
</dbReference>
<dbReference type="GO" id="GO:0006412">
    <property type="term" value="P:translation"/>
    <property type="evidence" value="ECO:0007669"/>
    <property type="project" value="UniProtKB-UniRule"/>
</dbReference>
<dbReference type="FunFam" id="3.30.1370.30:FF:000003">
    <property type="entry name" value="30S ribosomal protein S8"/>
    <property type="match status" value="1"/>
</dbReference>
<dbReference type="FunFam" id="3.30.1490.10:FF:000001">
    <property type="entry name" value="30S ribosomal protein S8"/>
    <property type="match status" value="1"/>
</dbReference>
<dbReference type="Gene3D" id="3.30.1370.30">
    <property type="match status" value="1"/>
</dbReference>
<dbReference type="Gene3D" id="3.30.1490.10">
    <property type="match status" value="1"/>
</dbReference>
<dbReference type="HAMAP" id="MF_01302_B">
    <property type="entry name" value="Ribosomal_uS8_B"/>
    <property type="match status" value="1"/>
</dbReference>
<dbReference type="InterPro" id="IPR000630">
    <property type="entry name" value="Ribosomal_uS8"/>
</dbReference>
<dbReference type="InterPro" id="IPR047863">
    <property type="entry name" value="Ribosomal_uS8_CS"/>
</dbReference>
<dbReference type="InterPro" id="IPR035987">
    <property type="entry name" value="Ribosomal_uS8_sf"/>
</dbReference>
<dbReference type="NCBIfam" id="NF001109">
    <property type="entry name" value="PRK00136.1"/>
    <property type="match status" value="1"/>
</dbReference>
<dbReference type="PANTHER" id="PTHR11758">
    <property type="entry name" value="40S RIBOSOMAL PROTEIN S15A"/>
    <property type="match status" value="1"/>
</dbReference>
<dbReference type="Pfam" id="PF00410">
    <property type="entry name" value="Ribosomal_S8"/>
    <property type="match status" value="1"/>
</dbReference>
<dbReference type="SUPFAM" id="SSF56047">
    <property type="entry name" value="Ribosomal protein S8"/>
    <property type="match status" value="1"/>
</dbReference>
<dbReference type="PROSITE" id="PS00053">
    <property type="entry name" value="RIBOSOMAL_S8"/>
    <property type="match status" value="1"/>
</dbReference>
<accession>P0A7X0</accession>
<accession>P02361</accession>
<evidence type="ECO:0000250" key="1"/>
<evidence type="ECO:0000305" key="2"/>
<gene>
    <name type="primary">rpsH</name>
    <name type="ordered locus">STM3426</name>
</gene>
<protein>
    <recommendedName>
        <fullName evidence="2">Small ribosomal subunit protein uS8</fullName>
    </recommendedName>
    <alternativeName>
        <fullName>30S ribosomal protein S8</fullName>
    </alternativeName>
</protein>